<keyword id="KW-0046">Antibiotic resistance</keyword>
<keyword id="KW-0963">Cytoplasm</keyword>
<keyword id="KW-0460">Magnesium</keyword>
<keyword id="KW-0479">Metal-binding</keyword>
<keyword id="KW-0808">Transferase</keyword>
<reference key="1">
    <citation type="submission" date="2009-04" db="EMBL/GenBank/DDBJ databases">
        <title>Genome sequence of Bacillus anthracis A0248.</title>
        <authorList>
            <person name="Dodson R.J."/>
            <person name="Munk A.C."/>
            <person name="Bruce D."/>
            <person name="Detter C."/>
            <person name="Tapia R."/>
            <person name="Sutton G."/>
            <person name="Sims D."/>
            <person name="Brettin T."/>
        </authorList>
    </citation>
    <scope>NUCLEOTIDE SEQUENCE [LARGE SCALE GENOMIC DNA]</scope>
    <source>
        <strain>A0248</strain>
    </source>
</reference>
<dbReference type="EC" id="2.5.1.-" evidence="1"/>
<dbReference type="EMBL" id="CP001598">
    <property type="protein sequence ID" value="ACQ50260.1"/>
    <property type="molecule type" value="Genomic_DNA"/>
</dbReference>
<dbReference type="RefSeq" id="WP_000911690.1">
    <property type="nucleotide sequence ID" value="NC_012659.1"/>
</dbReference>
<dbReference type="SMR" id="C3P803"/>
<dbReference type="GeneID" id="45021958"/>
<dbReference type="KEGG" id="bai:BAA_2109"/>
<dbReference type="HOGENOM" id="CLU_121356_0_0_9"/>
<dbReference type="GO" id="GO:0005737">
    <property type="term" value="C:cytoplasm"/>
    <property type="evidence" value="ECO:0007669"/>
    <property type="project" value="UniProtKB-SubCell"/>
</dbReference>
<dbReference type="GO" id="GO:0000287">
    <property type="term" value="F:magnesium ion binding"/>
    <property type="evidence" value="ECO:0007669"/>
    <property type="project" value="UniProtKB-UniRule"/>
</dbReference>
<dbReference type="GO" id="GO:0016765">
    <property type="term" value="F:transferase activity, transferring alkyl or aryl (other than methyl) groups"/>
    <property type="evidence" value="ECO:0007669"/>
    <property type="project" value="UniProtKB-UniRule"/>
</dbReference>
<dbReference type="GO" id="GO:0046677">
    <property type="term" value="P:response to antibiotic"/>
    <property type="evidence" value="ECO:0007669"/>
    <property type="project" value="UniProtKB-UniRule"/>
</dbReference>
<dbReference type="FunFam" id="3.10.180.10:FF:000015">
    <property type="entry name" value="Metallothiol transferase FosB"/>
    <property type="match status" value="1"/>
</dbReference>
<dbReference type="Gene3D" id="3.10.180.10">
    <property type="entry name" value="2,3-Dihydroxybiphenyl 1,2-Dioxygenase, domain 1"/>
    <property type="match status" value="1"/>
</dbReference>
<dbReference type="HAMAP" id="MF_01512">
    <property type="entry name" value="FosB"/>
    <property type="match status" value="1"/>
</dbReference>
<dbReference type="InterPro" id="IPR051332">
    <property type="entry name" value="Fosfomycin_Res_Enzymes"/>
</dbReference>
<dbReference type="InterPro" id="IPR029068">
    <property type="entry name" value="Glyas_Bleomycin-R_OHBP_Dase"/>
</dbReference>
<dbReference type="InterPro" id="IPR004360">
    <property type="entry name" value="Glyas_Fos-R_dOase_dom"/>
</dbReference>
<dbReference type="InterPro" id="IPR022858">
    <property type="entry name" value="Metallothiol_Trafse_FosB"/>
</dbReference>
<dbReference type="InterPro" id="IPR037523">
    <property type="entry name" value="VOC"/>
</dbReference>
<dbReference type="NCBIfam" id="NF000493">
    <property type="entry name" value="Fos_BSH"/>
    <property type="match status" value="1"/>
</dbReference>
<dbReference type="NCBIfam" id="NF041541">
    <property type="entry name" value="fosBx1_fam"/>
    <property type="match status" value="1"/>
</dbReference>
<dbReference type="NCBIfam" id="NF003152">
    <property type="entry name" value="PRK04101.1"/>
    <property type="match status" value="1"/>
</dbReference>
<dbReference type="PANTHER" id="PTHR36113:SF6">
    <property type="entry name" value="FOSFOMYCIN RESISTANCE PROTEIN FOSX"/>
    <property type="match status" value="1"/>
</dbReference>
<dbReference type="PANTHER" id="PTHR36113">
    <property type="entry name" value="LYASE, PUTATIVE-RELATED-RELATED"/>
    <property type="match status" value="1"/>
</dbReference>
<dbReference type="Pfam" id="PF00903">
    <property type="entry name" value="Glyoxalase"/>
    <property type="match status" value="1"/>
</dbReference>
<dbReference type="SUPFAM" id="SSF54593">
    <property type="entry name" value="Glyoxalase/Bleomycin resistance protein/Dihydroxybiphenyl dioxygenase"/>
    <property type="match status" value="1"/>
</dbReference>
<dbReference type="PROSITE" id="PS51819">
    <property type="entry name" value="VOC"/>
    <property type="match status" value="1"/>
</dbReference>
<name>FOSB1_BACAA</name>
<proteinExistence type="inferred from homology"/>
<evidence type="ECO:0000255" key="1">
    <source>
        <dbReference type="HAMAP-Rule" id="MF_01512"/>
    </source>
</evidence>
<evidence type="ECO:0000255" key="2">
    <source>
        <dbReference type="PROSITE-ProRule" id="PRU01163"/>
    </source>
</evidence>
<comment type="function">
    <text evidence="1">Metallothiol transferase which confers resistance to fosfomycin by catalyzing the addition of a thiol cofactor to fosfomycin. L-cysteine is probably the physiological thiol donor.</text>
</comment>
<comment type="cofactor">
    <cofactor evidence="1">
        <name>Mg(2+)</name>
        <dbReference type="ChEBI" id="CHEBI:18420"/>
    </cofactor>
</comment>
<comment type="subunit">
    <text evidence="1">Homodimer.</text>
</comment>
<comment type="subcellular location">
    <subcellularLocation>
        <location evidence="1">Cytoplasm</location>
    </subcellularLocation>
</comment>
<comment type="similarity">
    <text evidence="1">Belongs to the fosfomycin resistance protein family. FosB subfamily.</text>
</comment>
<gene>
    <name evidence="1" type="primary">fosB1</name>
    <name type="ordered locus">BAA_2109</name>
</gene>
<feature type="chain" id="PRO_0000383360" description="Metallothiol transferase FosB 1">
    <location>
        <begin position="1"/>
        <end position="138"/>
    </location>
</feature>
<feature type="domain" description="VOC" evidence="2">
    <location>
        <begin position="4"/>
        <end position="119"/>
    </location>
</feature>
<feature type="active site" description="Proton donor/acceptor" evidence="2">
    <location>
        <position position="115"/>
    </location>
</feature>
<feature type="binding site" evidence="1">
    <location>
        <position position="7"/>
    </location>
    <ligand>
        <name>Mg(2+)</name>
        <dbReference type="ChEBI" id="CHEBI:18420"/>
    </ligand>
</feature>
<feature type="binding site" evidence="1">
    <location>
        <position position="66"/>
    </location>
    <ligand>
        <name>Mg(2+)</name>
        <dbReference type="ChEBI" id="CHEBI:18420"/>
    </ligand>
</feature>
<feature type="binding site" evidence="1">
    <location>
        <position position="115"/>
    </location>
    <ligand>
        <name>Mg(2+)</name>
        <dbReference type="ChEBI" id="CHEBI:18420"/>
    </ligand>
</feature>
<organism>
    <name type="scientific">Bacillus anthracis (strain A0248)</name>
    <dbReference type="NCBI Taxonomy" id="592021"/>
    <lineage>
        <taxon>Bacteria</taxon>
        <taxon>Bacillati</taxon>
        <taxon>Bacillota</taxon>
        <taxon>Bacilli</taxon>
        <taxon>Bacillales</taxon>
        <taxon>Bacillaceae</taxon>
        <taxon>Bacillus</taxon>
        <taxon>Bacillus cereus group</taxon>
    </lineage>
</organism>
<accession>C3P803</accession>
<sequence length="138" mass="16538">MLKGINHLCFSVSNLEDSITFYEKVLEGELLVRGRKLAYFNICGVWIALNEEIHIPRKEIHQSYTHIAFSVEQKDFERLLQRLEENDVHILQGRERDVRDCESIYFVDPDGHKFEFHSGTLQERLNYYREDKPHMTFY</sequence>
<protein>
    <recommendedName>
        <fullName evidence="1">Metallothiol transferase FosB 1</fullName>
        <ecNumber evidence="1">2.5.1.-</ecNumber>
    </recommendedName>
    <alternativeName>
        <fullName evidence="1">Fosfomycin resistance protein 1</fullName>
    </alternativeName>
</protein>